<protein>
    <recommendedName>
        <fullName evidence="1">Succinyl-diaminopimelate desuccinylase</fullName>
        <shortName evidence="1">SDAP desuccinylase</shortName>
        <ecNumber evidence="1">3.5.1.18</ecNumber>
    </recommendedName>
    <alternativeName>
        <fullName evidence="1">N-succinyl-LL-2,6-diaminoheptanedioate amidohydrolase</fullName>
    </alternativeName>
</protein>
<gene>
    <name evidence="1" type="primary">dapE</name>
    <name type="ordered locus">Abu_1150</name>
</gene>
<organism>
    <name type="scientific">Aliarcobacter butzleri (strain RM4018)</name>
    <name type="common">Arcobacter butzleri</name>
    <dbReference type="NCBI Taxonomy" id="367737"/>
    <lineage>
        <taxon>Bacteria</taxon>
        <taxon>Pseudomonadati</taxon>
        <taxon>Campylobacterota</taxon>
        <taxon>Epsilonproteobacteria</taxon>
        <taxon>Campylobacterales</taxon>
        <taxon>Arcobacteraceae</taxon>
        <taxon>Aliarcobacter</taxon>
    </lineage>
</organism>
<sequence length="366" mass="40781">MSVIELFQKLLKFKSITPNDDGAFDFIQEYLGNEWNCIKVDMEGVKNRFYYKKFNDTKQHLCFAGHIDVVPVGNGWEVDPFAAEVIDGVITARGAQDMKSGDAAFLYACKNAKNFDGTLSILMTSDEEGEGTYGTIKMLEHLKQINMIPNYAVVAEPTCEEVFGDAIKVGRRGSINGYITIKGKQGHAAYPEKCINPVHNFAHILPKIAGINLDNGDEYFAPSKLVITDIRAGMEVTNVTPNELKIMFNVRNSTNTTKEDVENFINQNLKGLDYDFRITQGSFPFVTNKTSKVVIAMENSIYDILKIKTKHSTAGGTSDARYFGAFGIEAIEFGVINDTIHSINEKTTVKEVEGLTEVFENLIKNF</sequence>
<reference key="1">
    <citation type="journal article" date="2007" name="PLoS ONE">
        <title>The complete genome sequence and analysis of the Epsilonproteobacterium Arcobacter butzleri.</title>
        <authorList>
            <person name="Miller W.G."/>
            <person name="Parker C.T."/>
            <person name="Rubenfield M."/>
            <person name="Mendz G.L."/>
            <person name="Woesten M.M.S.M."/>
            <person name="Ussery D.W."/>
            <person name="Stolz J.F."/>
            <person name="Binnewies T.T."/>
            <person name="Hallin P.F."/>
            <person name="Wang G."/>
            <person name="Malek J.A."/>
            <person name="Rogosin A."/>
            <person name="Stanker L.H."/>
            <person name="Mandrell R.E."/>
        </authorList>
    </citation>
    <scope>NUCLEOTIDE SEQUENCE [LARGE SCALE GENOMIC DNA]</scope>
    <source>
        <strain>RM4018</strain>
    </source>
</reference>
<feature type="chain" id="PRO_0000375465" description="Succinyl-diaminopimelate desuccinylase">
    <location>
        <begin position="1"/>
        <end position="366"/>
    </location>
</feature>
<feature type="active site" evidence="1">
    <location>
        <position position="68"/>
    </location>
</feature>
<feature type="active site" description="Proton acceptor" evidence="1">
    <location>
        <position position="127"/>
    </location>
</feature>
<feature type="binding site" evidence="1">
    <location>
        <position position="66"/>
    </location>
    <ligand>
        <name>Zn(2+)</name>
        <dbReference type="ChEBI" id="CHEBI:29105"/>
        <label>1</label>
    </ligand>
</feature>
<feature type="binding site" evidence="1">
    <location>
        <position position="97"/>
    </location>
    <ligand>
        <name>Zn(2+)</name>
        <dbReference type="ChEBI" id="CHEBI:29105"/>
        <label>1</label>
    </ligand>
</feature>
<feature type="binding site" evidence="1">
    <location>
        <position position="97"/>
    </location>
    <ligand>
        <name>Zn(2+)</name>
        <dbReference type="ChEBI" id="CHEBI:29105"/>
        <label>2</label>
    </ligand>
</feature>
<feature type="binding site" evidence="1">
    <location>
        <position position="128"/>
    </location>
    <ligand>
        <name>Zn(2+)</name>
        <dbReference type="ChEBI" id="CHEBI:29105"/>
        <label>2</label>
    </ligand>
</feature>
<feature type="binding site" evidence="1">
    <location>
        <position position="156"/>
    </location>
    <ligand>
        <name>Zn(2+)</name>
        <dbReference type="ChEBI" id="CHEBI:29105"/>
        <label>1</label>
    </ligand>
</feature>
<feature type="binding site" evidence="1">
    <location>
        <position position="341"/>
    </location>
    <ligand>
        <name>Zn(2+)</name>
        <dbReference type="ChEBI" id="CHEBI:29105"/>
        <label>2</label>
    </ligand>
</feature>
<proteinExistence type="inferred from homology"/>
<accession>A8ETY6</accession>
<evidence type="ECO:0000255" key="1">
    <source>
        <dbReference type="HAMAP-Rule" id="MF_01690"/>
    </source>
</evidence>
<name>DAPE_ALIB4</name>
<dbReference type="EC" id="3.5.1.18" evidence="1"/>
<dbReference type="EMBL" id="CP000361">
    <property type="protein sequence ID" value="ABV67410.1"/>
    <property type="molecule type" value="Genomic_DNA"/>
</dbReference>
<dbReference type="RefSeq" id="WP_012012850.1">
    <property type="nucleotide sequence ID" value="NC_009850.1"/>
</dbReference>
<dbReference type="SMR" id="A8ETY6"/>
<dbReference type="STRING" id="367737.Abu_1150"/>
<dbReference type="MEROPS" id="M20.010"/>
<dbReference type="GeneID" id="24305009"/>
<dbReference type="KEGG" id="abu:Abu_1150"/>
<dbReference type="eggNOG" id="COG0624">
    <property type="taxonomic scope" value="Bacteria"/>
</dbReference>
<dbReference type="HOGENOM" id="CLU_021802_4_0_7"/>
<dbReference type="UniPathway" id="UPA00034">
    <property type="reaction ID" value="UER00021"/>
</dbReference>
<dbReference type="Proteomes" id="UP000001136">
    <property type="component" value="Chromosome"/>
</dbReference>
<dbReference type="GO" id="GO:0008777">
    <property type="term" value="F:acetylornithine deacetylase activity"/>
    <property type="evidence" value="ECO:0007669"/>
    <property type="project" value="TreeGrafter"/>
</dbReference>
<dbReference type="GO" id="GO:0046872">
    <property type="term" value="F:metal ion binding"/>
    <property type="evidence" value="ECO:0007669"/>
    <property type="project" value="UniProtKB-KW"/>
</dbReference>
<dbReference type="GO" id="GO:0009014">
    <property type="term" value="F:succinyl-diaminopimelate desuccinylase activity"/>
    <property type="evidence" value="ECO:0007669"/>
    <property type="project" value="UniProtKB-EC"/>
</dbReference>
<dbReference type="GO" id="GO:0019877">
    <property type="term" value="P:diaminopimelate biosynthetic process"/>
    <property type="evidence" value="ECO:0007669"/>
    <property type="project" value="UniProtKB-KW"/>
</dbReference>
<dbReference type="GO" id="GO:0006526">
    <property type="term" value="P:L-arginine biosynthetic process"/>
    <property type="evidence" value="ECO:0007669"/>
    <property type="project" value="TreeGrafter"/>
</dbReference>
<dbReference type="GO" id="GO:0009089">
    <property type="term" value="P:lysine biosynthetic process via diaminopimelate"/>
    <property type="evidence" value="ECO:0007669"/>
    <property type="project" value="UniProtKB-UniPathway"/>
</dbReference>
<dbReference type="CDD" id="cd03891">
    <property type="entry name" value="M20_DapE_proteobac"/>
    <property type="match status" value="1"/>
</dbReference>
<dbReference type="Gene3D" id="1.10.150.900">
    <property type="match status" value="1"/>
</dbReference>
<dbReference type="Gene3D" id="3.30.70.360">
    <property type="match status" value="1"/>
</dbReference>
<dbReference type="Gene3D" id="3.40.630.10">
    <property type="entry name" value="Zn peptidases"/>
    <property type="match status" value="1"/>
</dbReference>
<dbReference type="HAMAP" id="MF_01690">
    <property type="entry name" value="DapE"/>
    <property type="match status" value="1"/>
</dbReference>
<dbReference type="InterPro" id="IPR001261">
    <property type="entry name" value="ArgE/DapE_CS"/>
</dbReference>
<dbReference type="InterPro" id="IPR036264">
    <property type="entry name" value="Bact_exopeptidase_dim_dom"/>
</dbReference>
<dbReference type="InterPro" id="IPR005941">
    <property type="entry name" value="DapE_proteobac"/>
</dbReference>
<dbReference type="InterPro" id="IPR002933">
    <property type="entry name" value="Peptidase_M20"/>
</dbReference>
<dbReference type="InterPro" id="IPR011650">
    <property type="entry name" value="Peptidase_M20_dimer"/>
</dbReference>
<dbReference type="InterPro" id="IPR050072">
    <property type="entry name" value="Peptidase_M20A"/>
</dbReference>
<dbReference type="NCBIfam" id="TIGR01246">
    <property type="entry name" value="dapE_proteo"/>
    <property type="match status" value="1"/>
</dbReference>
<dbReference type="NCBIfam" id="NF009557">
    <property type="entry name" value="PRK13009.1"/>
    <property type="match status" value="1"/>
</dbReference>
<dbReference type="PANTHER" id="PTHR43808">
    <property type="entry name" value="ACETYLORNITHINE DEACETYLASE"/>
    <property type="match status" value="1"/>
</dbReference>
<dbReference type="PANTHER" id="PTHR43808:SF31">
    <property type="entry name" value="N-ACETYL-L-CITRULLINE DEACETYLASE"/>
    <property type="match status" value="1"/>
</dbReference>
<dbReference type="Pfam" id="PF07687">
    <property type="entry name" value="M20_dimer"/>
    <property type="match status" value="1"/>
</dbReference>
<dbReference type="Pfam" id="PF01546">
    <property type="entry name" value="Peptidase_M20"/>
    <property type="match status" value="1"/>
</dbReference>
<dbReference type="SUPFAM" id="SSF55031">
    <property type="entry name" value="Bacterial exopeptidase dimerisation domain"/>
    <property type="match status" value="1"/>
</dbReference>
<dbReference type="SUPFAM" id="SSF53187">
    <property type="entry name" value="Zn-dependent exopeptidases"/>
    <property type="match status" value="1"/>
</dbReference>
<dbReference type="PROSITE" id="PS00759">
    <property type="entry name" value="ARGE_DAPE_CPG2_2"/>
    <property type="match status" value="1"/>
</dbReference>
<comment type="function">
    <text evidence="1">Catalyzes the hydrolysis of N-succinyl-L,L-diaminopimelic acid (SDAP), forming succinate and LL-2,6-diaminopimelate (DAP), an intermediate involved in the bacterial biosynthesis of lysine and meso-diaminopimelic acid, an essential component of bacterial cell walls.</text>
</comment>
<comment type="catalytic activity">
    <reaction evidence="1">
        <text>N-succinyl-(2S,6S)-2,6-diaminopimelate + H2O = (2S,6S)-2,6-diaminopimelate + succinate</text>
        <dbReference type="Rhea" id="RHEA:22608"/>
        <dbReference type="ChEBI" id="CHEBI:15377"/>
        <dbReference type="ChEBI" id="CHEBI:30031"/>
        <dbReference type="ChEBI" id="CHEBI:57609"/>
        <dbReference type="ChEBI" id="CHEBI:58087"/>
        <dbReference type="EC" id="3.5.1.18"/>
    </reaction>
</comment>
<comment type="cofactor">
    <cofactor evidence="1">
        <name>Zn(2+)</name>
        <dbReference type="ChEBI" id="CHEBI:29105"/>
    </cofactor>
    <cofactor evidence="1">
        <name>Co(2+)</name>
        <dbReference type="ChEBI" id="CHEBI:48828"/>
    </cofactor>
    <text evidence="1">Binds 2 Zn(2+) or Co(2+) ions per subunit.</text>
</comment>
<comment type="pathway">
    <text evidence="1">Amino-acid biosynthesis; L-lysine biosynthesis via DAP pathway; LL-2,6-diaminopimelate from (S)-tetrahydrodipicolinate (succinylase route): step 3/3.</text>
</comment>
<comment type="subunit">
    <text evidence="1">Homodimer.</text>
</comment>
<comment type="similarity">
    <text evidence="1">Belongs to the peptidase M20A family. DapE subfamily.</text>
</comment>
<keyword id="KW-0028">Amino-acid biosynthesis</keyword>
<keyword id="KW-0170">Cobalt</keyword>
<keyword id="KW-0220">Diaminopimelate biosynthesis</keyword>
<keyword id="KW-0378">Hydrolase</keyword>
<keyword id="KW-0457">Lysine biosynthesis</keyword>
<keyword id="KW-0479">Metal-binding</keyword>
<keyword id="KW-1185">Reference proteome</keyword>
<keyword id="KW-0862">Zinc</keyword>